<organism>
    <name type="scientific">Mesostigma viride</name>
    <name type="common">Green alga</name>
    <dbReference type="NCBI Taxonomy" id="41882"/>
    <lineage>
        <taxon>Eukaryota</taxon>
        <taxon>Viridiplantae</taxon>
        <taxon>Streptophyta</taxon>
        <taxon>Mesostigmatophyceae</taxon>
        <taxon>Mesostigmatales</taxon>
        <taxon>Mesostigmataceae</taxon>
        <taxon>Mesostigma</taxon>
    </lineage>
</organism>
<keyword id="KW-0067">ATP-binding</keyword>
<keyword id="KW-0150">Chloroplast</keyword>
<keyword id="KW-0547">Nucleotide-binding</keyword>
<keyword id="KW-0934">Plastid</keyword>
<keyword id="KW-0764">Sulfate transport</keyword>
<keyword id="KW-1278">Translocase</keyword>
<keyword id="KW-0813">Transport</keyword>
<protein>
    <recommendedName>
        <fullName evidence="1">Sulfate/thiosulfate import ATP-binding protein CysA</fullName>
        <ecNumber evidence="1">7.3.2.3</ecNumber>
    </recommendedName>
    <alternativeName>
        <fullName evidence="1">Sulfate-transporting ATPase</fullName>
    </alternativeName>
</protein>
<geneLocation type="chloroplast"/>
<comment type="function">
    <text evidence="1">Part of the ABC transporter complex involved in sulfate/thiosulfate import. Responsible for energy coupling to the transport system.</text>
</comment>
<comment type="catalytic activity">
    <reaction evidence="1">
        <text>sulfate(out) + ATP + H2O = sulfate(in) + ADP + phosphate + H(+)</text>
        <dbReference type="Rhea" id="RHEA:10192"/>
        <dbReference type="ChEBI" id="CHEBI:15377"/>
        <dbReference type="ChEBI" id="CHEBI:15378"/>
        <dbReference type="ChEBI" id="CHEBI:16189"/>
        <dbReference type="ChEBI" id="CHEBI:30616"/>
        <dbReference type="ChEBI" id="CHEBI:43474"/>
        <dbReference type="ChEBI" id="CHEBI:456216"/>
        <dbReference type="EC" id="7.3.2.3"/>
    </reaction>
</comment>
<comment type="catalytic activity">
    <reaction evidence="1">
        <text>thiosulfate(out) + ATP + H2O = thiosulfate(in) + ADP + phosphate + H(+)</text>
        <dbReference type="Rhea" id="RHEA:29871"/>
        <dbReference type="ChEBI" id="CHEBI:15377"/>
        <dbReference type="ChEBI" id="CHEBI:15378"/>
        <dbReference type="ChEBI" id="CHEBI:30616"/>
        <dbReference type="ChEBI" id="CHEBI:33542"/>
        <dbReference type="ChEBI" id="CHEBI:43474"/>
        <dbReference type="ChEBI" id="CHEBI:456216"/>
        <dbReference type="EC" id="7.3.2.3"/>
    </reaction>
</comment>
<comment type="subcellular location">
    <subcellularLocation>
        <location>Plastid</location>
        <location>Chloroplast</location>
    </subcellularLocation>
</comment>
<comment type="similarity">
    <text evidence="1">Belongs to the ABC transporter superfamily. Sulfate/tungstate importer (TC 3.A.1.6) family.</text>
</comment>
<gene>
    <name evidence="1" type="primary">cysA</name>
</gene>
<evidence type="ECO:0000255" key="1">
    <source>
        <dbReference type="HAMAP-Rule" id="MF_01701"/>
    </source>
</evidence>
<name>CYSA_MESVI</name>
<sequence>MSILIDNISKKFGNFQALNHINLEIKSGSIIALLGPSGSGKSTLLRIIAGLDTPDEGTIWISGKNASGYSIQSRNIGFVFQNYALFKNMTVYDNIAFGLELRRISFNDISRKVNKLLELVQLQNLGHRYPAQLSGGQRQRIALARALAIEPKVLLLDEPFGALDARVRKNLRAWLRDLHNKFSITTIIVTHDQQEAMEIADEIVVFNSGRIEQIGKPQDIYDQPATPFVFSLLGYVNKISFDNEIANFLLSSFPEKQSVLMQEKQFYIRPHQIVISKQSNESNYSAKIENLLYIGNWIHLDIYVASFNVNLKVHVSPKEFDNLQLKSFQENIYVSLRSKGKEPIRFLE</sequence>
<dbReference type="EC" id="7.3.2.3" evidence="1"/>
<dbReference type="EMBL" id="AF166114">
    <property type="protein sequence ID" value="AAF43869.1"/>
    <property type="molecule type" value="Genomic_DNA"/>
</dbReference>
<dbReference type="RefSeq" id="NP_038429.1">
    <property type="nucleotide sequence ID" value="NC_002186.1"/>
</dbReference>
<dbReference type="SMR" id="Q9MUN1"/>
<dbReference type="GeneID" id="800867"/>
<dbReference type="GO" id="GO:0043190">
    <property type="term" value="C:ATP-binding cassette (ABC) transporter complex"/>
    <property type="evidence" value="ECO:0007669"/>
    <property type="project" value="InterPro"/>
</dbReference>
<dbReference type="GO" id="GO:0009507">
    <property type="term" value="C:chloroplast"/>
    <property type="evidence" value="ECO:0007669"/>
    <property type="project" value="UniProtKB-SubCell"/>
</dbReference>
<dbReference type="GO" id="GO:0015419">
    <property type="term" value="F:ABC-type sulfate transporter activity"/>
    <property type="evidence" value="ECO:0007669"/>
    <property type="project" value="InterPro"/>
</dbReference>
<dbReference type="GO" id="GO:0102025">
    <property type="term" value="F:ABC-type thiosulfate transporter activity"/>
    <property type="evidence" value="ECO:0007669"/>
    <property type="project" value="RHEA"/>
</dbReference>
<dbReference type="GO" id="GO:0005524">
    <property type="term" value="F:ATP binding"/>
    <property type="evidence" value="ECO:0007669"/>
    <property type="project" value="UniProtKB-KW"/>
</dbReference>
<dbReference type="GO" id="GO:0016887">
    <property type="term" value="F:ATP hydrolysis activity"/>
    <property type="evidence" value="ECO:0007669"/>
    <property type="project" value="InterPro"/>
</dbReference>
<dbReference type="CDD" id="cd03296">
    <property type="entry name" value="ABC_CysA_sulfate_importer"/>
    <property type="match status" value="1"/>
</dbReference>
<dbReference type="FunFam" id="3.40.50.300:FF:000425">
    <property type="entry name" value="Probable ABC transporter, ATP-binding subunit"/>
    <property type="match status" value="1"/>
</dbReference>
<dbReference type="Gene3D" id="3.40.50.300">
    <property type="entry name" value="P-loop containing nucleotide triphosphate hydrolases"/>
    <property type="match status" value="1"/>
</dbReference>
<dbReference type="InterPro" id="IPR003593">
    <property type="entry name" value="AAA+_ATPase"/>
</dbReference>
<dbReference type="InterPro" id="IPR050093">
    <property type="entry name" value="ABC_SmlMolc_Importer"/>
</dbReference>
<dbReference type="InterPro" id="IPR003439">
    <property type="entry name" value="ABC_transporter-like_ATP-bd"/>
</dbReference>
<dbReference type="InterPro" id="IPR017871">
    <property type="entry name" value="ABC_transporter-like_CS"/>
</dbReference>
<dbReference type="InterPro" id="IPR027417">
    <property type="entry name" value="P-loop_NTPase"/>
</dbReference>
<dbReference type="InterPro" id="IPR005666">
    <property type="entry name" value="Sulph_transpt1"/>
</dbReference>
<dbReference type="NCBIfam" id="TIGR00968">
    <property type="entry name" value="3a0106s01"/>
    <property type="match status" value="1"/>
</dbReference>
<dbReference type="PANTHER" id="PTHR42781">
    <property type="entry name" value="SPERMIDINE/PUTRESCINE IMPORT ATP-BINDING PROTEIN POTA"/>
    <property type="match status" value="1"/>
</dbReference>
<dbReference type="PANTHER" id="PTHR42781:SF4">
    <property type="entry name" value="SPERMIDINE_PUTRESCINE IMPORT ATP-BINDING PROTEIN POTA"/>
    <property type="match status" value="1"/>
</dbReference>
<dbReference type="Pfam" id="PF00005">
    <property type="entry name" value="ABC_tran"/>
    <property type="match status" value="1"/>
</dbReference>
<dbReference type="SMART" id="SM00382">
    <property type="entry name" value="AAA"/>
    <property type="match status" value="1"/>
</dbReference>
<dbReference type="SUPFAM" id="SSF52540">
    <property type="entry name" value="P-loop containing nucleoside triphosphate hydrolases"/>
    <property type="match status" value="1"/>
</dbReference>
<dbReference type="PROSITE" id="PS00211">
    <property type="entry name" value="ABC_TRANSPORTER_1"/>
    <property type="match status" value="1"/>
</dbReference>
<dbReference type="PROSITE" id="PS50893">
    <property type="entry name" value="ABC_TRANSPORTER_2"/>
    <property type="match status" value="1"/>
</dbReference>
<dbReference type="PROSITE" id="PS51237">
    <property type="entry name" value="CYSA"/>
    <property type="match status" value="1"/>
</dbReference>
<accession>Q9MUN1</accession>
<reference key="1">
    <citation type="journal article" date="2000" name="Nature">
        <title>Ancestral chloroplast genome in Mesostigma viride reveals an early branch of green plant evolution.</title>
        <authorList>
            <person name="Lemieux C."/>
            <person name="Otis C."/>
            <person name="Turmel M."/>
        </authorList>
    </citation>
    <scope>NUCLEOTIDE SEQUENCE [LARGE SCALE GENOMIC DNA]</scope>
    <source>
        <strain>NIES-296 / KY-14 / CCMP 2046</strain>
    </source>
</reference>
<proteinExistence type="inferred from homology"/>
<feature type="chain" id="PRO_0000092309" description="Sulfate/thiosulfate import ATP-binding protein CysA">
    <location>
        <begin position="1"/>
        <end position="348"/>
    </location>
</feature>
<feature type="domain" description="ABC transporter" evidence="1">
    <location>
        <begin position="3"/>
        <end position="233"/>
    </location>
</feature>
<feature type="binding site" evidence="1">
    <location>
        <begin position="35"/>
        <end position="42"/>
    </location>
    <ligand>
        <name>ATP</name>
        <dbReference type="ChEBI" id="CHEBI:30616"/>
    </ligand>
</feature>